<dbReference type="EMBL" id="AL591688">
    <property type="protein sequence ID" value="CAC41823.1"/>
    <property type="molecule type" value="Genomic_DNA"/>
</dbReference>
<dbReference type="RefSeq" id="NP_384492.1">
    <property type="nucleotide sequence ID" value="NC_003047.1"/>
</dbReference>
<dbReference type="RefSeq" id="WP_003527713.1">
    <property type="nucleotide sequence ID" value="NC_003047.1"/>
</dbReference>
<dbReference type="SMR" id="Q92SJ7"/>
<dbReference type="EnsemblBacteria" id="CAC41823">
    <property type="protein sequence ID" value="CAC41823"/>
    <property type="gene ID" value="SMc01134"/>
</dbReference>
<dbReference type="KEGG" id="sme:SMc01134"/>
<dbReference type="PATRIC" id="fig|266834.11.peg.1759"/>
<dbReference type="eggNOG" id="COG0776">
    <property type="taxonomic scope" value="Bacteria"/>
</dbReference>
<dbReference type="HOGENOM" id="CLU_105066_2_1_5"/>
<dbReference type="OrthoDB" id="9804203at2"/>
<dbReference type="Proteomes" id="UP000001976">
    <property type="component" value="Chromosome"/>
</dbReference>
<dbReference type="GO" id="GO:0005694">
    <property type="term" value="C:chromosome"/>
    <property type="evidence" value="ECO:0007669"/>
    <property type="project" value="InterPro"/>
</dbReference>
<dbReference type="GO" id="GO:0005829">
    <property type="term" value="C:cytosol"/>
    <property type="evidence" value="ECO:0007669"/>
    <property type="project" value="TreeGrafter"/>
</dbReference>
<dbReference type="GO" id="GO:0003677">
    <property type="term" value="F:DNA binding"/>
    <property type="evidence" value="ECO:0007669"/>
    <property type="project" value="UniProtKB-UniRule"/>
</dbReference>
<dbReference type="GO" id="GO:0030527">
    <property type="term" value="F:structural constituent of chromatin"/>
    <property type="evidence" value="ECO:0007669"/>
    <property type="project" value="InterPro"/>
</dbReference>
<dbReference type="GO" id="GO:0006310">
    <property type="term" value="P:DNA recombination"/>
    <property type="evidence" value="ECO:0007669"/>
    <property type="project" value="UniProtKB-UniRule"/>
</dbReference>
<dbReference type="GO" id="GO:0006355">
    <property type="term" value="P:regulation of DNA-templated transcription"/>
    <property type="evidence" value="ECO:0007669"/>
    <property type="project" value="UniProtKB-UniRule"/>
</dbReference>
<dbReference type="GO" id="GO:0006417">
    <property type="term" value="P:regulation of translation"/>
    <property type="evidence" value="ECO:0007669"/>
    <property type="project" value="UniProtKB-UniRule"/>
</dbReference>
<dbReference type="CDD" id="cd13836">
    <property type="entry name" value="IHF_B"/>
    <property type="match status" value="1"/>
</dbReference>
<dbReference type="Gene3D" id="4.10.520.10">
    <property type="entry name" value="IHF-like DNA-binding proteins"/>
    <property type="match status" value="1"/>
</dbReference>
<dbReference type="HAMAP" id="MF_00381">
    <property type="entry name" value="IHF_beta"/>
    <property type="match status" value="1"/>
</dbReference>
<dbReference type="InterPro" id="IPR000119">
    <property type="entry name" value="Hist_DNA-bd"/>
</dbReference>
<dbReference type="InterPro" id="IPR020816">
    <property type="entry name" value="Histone-like_DNA-bd_CS"/>
</dbReference>
<dbReference type="InterPro" id="IPR010992">
    <property type="entry name" value="IHF-like_DNA-bd_dom_sf"/>
</dbReference>
<dbReference type="InterPro" id="IPR005685">
    <property type="entry name" value="IHF_beta"/>
</dbReference>
<dbReference type="NCBIfam" id="TIGR00988">
    <property type="entry name" value="hip"/>
    <property type="match status" value="1"/>
</dbReference>
<dbReference type="NCBIfam" id="NF001222">
    <property type="entry name" value="PRK00199.1"/>
    <property type="match status" value="1"/>
</dbReference>
<dbReference type="PANTHER" id="PTHR33175">
    <property type="entry name" value="DNA-BINDING PROTEIN HU"/>
    <property type="match status" value="1"/>
</dbReference>
<dbReference type="PANTHER" id="PTHR33175:SF5">
    <property type="entry name" value="INTEGRATION HOST FACTOR SUBUNIT BETA"/>
    <property type="match status" value="1"/>
</dbReference>
<dbReference type="Pfam" id="PF00216">
    <property type="entry name" value="Bac_DNA_binding"/>
    <property type="match status" value="1"/>
</dbReference>
<dbReference type="PRINTS" id="PR01727">
    <property type="entry name" value="DNABINDINGHU"/>
</dbReference>
<dbReference type="SMART" id="SM00411">
    <property type="entry name" value="BHL"/>
    <property type="match status" value="1"/>
</dbReference>
<dbReference type="SUPFAM" id="SSF47729">
    <property type="entry name" value="IHF-like DNA-binding proteins"/>
    <property type="match status" value="1"/>
</dbReference>
<dbReference type="PROSITE" id="PS00045">
    <property type="entry name" value="HISTONE_LIKE"/>
    <property type="match status" value="1"/>
</dbReference>
<sequence length="103" mass="11608">MIKSELVQIVAARNPHLYHRDVENIVNAVLDEITDALAAGNRVELRGFGAFSVKNRPSRSGRNPRTGDSVFVEEKWVPFFKTGKELRERLNPGMNDNNNGEDD</sequence>
<comment type="function">
    <text evidence="1">This protein is one of the two subunits of integration host factor, a specific DNA-binding protein that functions in genetic recombination as well as in transcriptional and translational control.</text>
</comment>
<comment type="subunit">
    <text evidence="1">Heterodimer of an alpha and a beta chain.</text>
</comment>
<comment type="similarity">
    <text evidence="1">Belongs to the bacterial histone-like protein family.</text>
</comment>
<name>IHFB_RHIME</name>
<feature type="chain" id="PRO_0000105066" description="Integration host factor subunit beta">
    <location>
        <begin position="1"/>
        <end position="103"/>
    </location>
</feature>
<organism>
    <name type="scientific">Rhizobium meliloti (strain 1021)</name>
    <name type="common">Ensifer meliloti</name>
    <name type="synonym">Sinorhizobium meliloti</name>
    <dbReference type="NCBI Taxonomy" id="266834"/>
    <lineage>
        <taxon>Bacteria</taxon>
        <taxon>Pseudomonadati</taxon>
        <taxon>Pseudomonadota</taxon>
        <taxon>Alphaproteobacteria</taxon>
        <taxon>Hyphomicrobiales</taxon>
        <taxon>Rhizobiaceae</taxon>
        <taxon>Sinorhizobium/Ensifer group</taxon>
        <taxon>Sinorhizobium</taxon>
    </lineage>
</organism>
<evidence type="ECO:0000255" key="1">
    <source>
        <dbReference type="HAMAP-Rule" id="MF_00381"/>
    </source>
</evidence>
<proteinExistence type="inferred from homology"/>
<reference key="1">
    <citation type="journal article" date="2001" name="Proc. Natl. Acad. Sci. U.S.A.">
        <title>Analysis of the chromosome sequence of the legume symbiont Sinorhizobium meliloti strain 1021.</title>
        <authorList>
            <person name="Capela D."/>
            <person name="Barloy-Hubler F."/>
            <person name="Gouzy J."/>
            <person name="Bothe G."/>
            <person name="Ampe F."/>
            <person name="Batut J."/>
            <person name="Boistard P."/>
            <person name="Becker A."/>
            <person name="Boutry M."/>
            <person name="Cadieu E."/>
            <person name="Dreano S."/>
            <person name="Gloux S."/>
            <person name="Godrie T."/>
            <person name="Goffeau A."/>
            <person name="Kahn D."/>
            <person name="Kiss E."/>
            <person name="Lelaure V."/>
            <person name="Masuy D."/>
            <person name="Pohl T."/>
            <person name="Portetelle D."/>
            <person name="Puehler A."/>
            <person name="Purnelle B."/>
            <person name="Ramsperger U."/>
            <person name="Renard C."/>
            <person name="Thebault P."/>
            <person name="Vandenbol M."/>
            <person name="Weidner S."/>
            <person name="Galibert F."/>
        </authorList>
    </citation>
    <scope>NUCLEOTIDE SEQUENCE [LARGE SCALE GENOMIC DNA]</scope>
    <source>
        <strain>1021</strain>
    </source>
</reference>
<reference key="2">
    <citation type="journal article" date="2001" name="Science">
        <title>The composite genome of the legume symbiont Sinorhizobium meliloti.</title>
        <authorList>
            <person name="Galibert F."/>
            <person name="Finan T.M."/>
            <person name="Long S.R."/>
            <person name="Puehler A."/>
            <person name="Abola P."/>
            <person name="Ampe F."/>
            <person name="Barloy-Hubler F."/>
            <person name="Barnett M.J."/>
            <person name="Becker A."/>
            <person name="Boistard P."/>
            <person name="Bothe G."/>
            <person name="Boutry M."/>
            <person name="Bowser L."/>
            <person name="Buhrmester J."/>
            <person name="Cadieu E."/>
            <person name="Capela D."/>
            <person name="Chain P."/>
            <person name="Cowie A."/>
            <person name="Davis R.W."/>
            <person name="Dreano S."/>
            <person name="Federspiel N.A."/>
            <person name="Fisher R.F."/>
            <person name="Gloux S."/>
            <person name="Godrie T."/>
            <person name="Goffeau A."/>
            <person name="Golding B."/>
            <person name="Gouzy J."/>
            <person name="Gurjal M."/>
            <person name="Hernandez-Lucas I."/>
            <person name="Hong A."/>
            <person name="Huizar L."/>
            <person name="Hyman R.W."/>
            <person name="Jones T."/>
            <person name="Kahn D."/>
            <person name="Kahn M.L."/>
            <person name="Kalman S."/>
            <person name="Keating D.H."/>
            <person name="Kiss E."/>
            <person name="Komp C."/>
            <person name="Lelaure V."/>
            <person name="Masuy D."/>
            <person name="Palm C."/>
            <person name="Peck M.C."/>
            <person name="Pohl T.M."/>
            <person name="Portetelle D."/>
            <person name="Purnelle B."/>
            <person name="Ramsperger U."/>
            <person name="Surzycki R."/>
            <person name="Thebault P."/>
            <person name="Vandenbol M."/>
            <person name="Vorhoelter F.J."/>
            <person name="Weidner S."/>
            <person name="Wells D.H."/>
            <person name="Wong K."/>
            <person name="Yeh K.-C."/>
            <person name="Batut J."/>
        </authorList>
    </citation>
    <scope>NUCLEOTIDE SEQUENCE [LARGE SCALE GENOMIC DNA]</scope>
    <source>
        <strain>1021</strain>
    </source>
</reference>
<keyword id="KW-0233">DNA recombination</keyword>
<keyword id="KW-0238">DNA-binding</keyword>
<keyword id="KW-1185">Reference proteome</keyword>
<keyword id="KW-0804">Transcription</keyword>
<keyword id="KW-0805">Transcription regulation</keyword>
<keyword id="KW-0810">Translation regulation</keyword>
<accession>Q92SJ7</accession>
<gene>
    <name evidence="1" type="primary">ihfB</name>
    <name evidence="1" type="synonym">himD</name>
    <name type="ordered locus">R00386</name>
    <name type="ORF">SMc01134</name>
</gene>
<protein>
    <recommendedName>
        <fullName evidence="1">Integration host factor subunit beta</fullName>
        <shortName evidence="1">IHF-beta</shortName>
    </recommendedName>
</protein>